<gene>
    <name type="primary">rps7-A</name>
</gene>
<gene>
    <name type="primary">rps7-B</name>
</gene>
<name>RR7_NICTO</name>
<feature type="chain" id="PRO_0000277047" description="Small ribosomal subunit protein uS7cz/uS7cy">
    <location>
        <begin position="1"/>
        <end position="155"/>
    </location>
</feature>
<comment type="function">
    <text evidence="1">One of the primary rRNA binding proteins, it binds directly to 16S rRNA where it nucleates assembly of the head domain of the 30S subunit.</text>
</comment>
<comment type="subunit">
    <text>Part of the 30S ribosomal subunit.</text>
</comment>
<comment type="subcellular location">
    <subcellularLocation>
        <location>Plastid</location>
        <location>Chloroplast</location>
    </subcellularLocation>
</comment>
<comment type="similarity">
    <text evidence="3">Belongs to the universal ribosomal protein uS7 family.</text>
</comment>
<keyword id="KW-0150">Chloroplast</keyword>
<keyword id="KW-0934">Plastid</keyword>
<keyword id="KW-0687">Ribonucleoprotein</keyword>
<keyword id="KW-0689">Ribosomal protein</keyword>
<keyword id="KW-0694">RNA-binding</keyword>
<keyword id="KW-0699">rRNA-binding</keyword>
<protein>
    <recommendedName>
        <fullName evidence="2">Small ribosomal subunit protein uS7cz/uS7cy</fullName>
    </recommendedName>
    <alternativeName>
        <fullName>30S ribosomal protein S7, chloroplastic</fullName>
    </alternativeName>
</protein>
<sequence>MSRRGTAEKKTAKSDPIYRNRLVNMLVNRILKHGKKSLAYQIIYRAVKKIQQKTETNPLSVLRQAIRGVTPDITVKARRVGGSTHQVPIEIGSTQGKALAIRWLLAASRKRPGRNMAFKLSSELVDAAKGSGDAIRKKEETHRMAEANRAFAHFR</sequence>
<organism>
    <name type="scientific">Nicotiana tomentosiformis</name>
    <name type="common">Tobacco</name>
    <dbReference type="NCBI Taxonomy" id="4098"/>
    <lineage>
        <taxon>Eukaryota</taxon>
        <taxon>Viridiplantae</taxon>
        <taxon>Streptophyta</taxon>
        <taxon>Embryophyta</taxon>
        <taxon>Tracheophyta</taxon>
        <taxon>Spermatophyta</taxon>
        <taxon>Magnoliopsida</taxon>
        <taxon>eudicotyledons</taxon>
        <taxon>Gunneridae</taxon>
        <taxon>Pentapetalae</taxon>
        <taxon>asterids</taxon>
        <taxon>lamiids</taxon>
        <taxon>Solanales</taxon>
        <taxon>Solanaceae</taxon>
        <taxon>Nicotianoideae</taxon>
        <taxon>Nicotianeae</taxon>
        <taxon>Nicotiana</taxon>
    </lineage>
</organism>
<accession>Q33BY2</accession>
<geneLocation type="chloroplast"/>
<reference key="1">
    <citation type="journal article" date="2006" name="Mol. Genet. Genomics">
        <title>The chloroplast genome of Nicotiana sylvestris and Nicotiana tomentosiformis: complete sequencing confirms that the Nicotiana sylvestris progenitor is the maternal genome donor of Nicotiana tabacum.</title>
        <authorList>
            <person name="Yukawa M."/>
            <person name="Tsudzuki T."/>
            <person name="Sugiura M."/>
        </authorList>
    </citation>
    <scope>NUCLEOTIDE SEQUENCE [LARGE SCALE GENOMIC DNA]</scope>
</reference>
<dbReference type="EMBL" id="AB240139">
    <property type="protein sequence ID" value="BAE48053.1"/>
    <property type="molecule type" value="Genomic_DNA"/>
</dbReference>
<dbReference type="EMBL" id="AB240139">
    <property type="protein sequence ID" value="BAE48076.1"/>
    <property type="molecule type" value="Genomic_DNA"/>
</dbReference>
<dbReference type="SMR" id="Q33BY2"/>
<dbReference type="KEGG" id="nto:3776391"/>
<dbReference type="KEGG" id="nto:3776392"/>
<dbReference type="OrthoDB" id="1261259at2759"/>
<dbReference type="GO" id="GO:0009507">
    <property type="term" value="C:chloroplast"/>
    <property type="evidence" value="ECO:0007669"/>
    <property type="project" value="UniProtKB-SubCell"/>
</dbReference>
<dbReference type="GO" id="GO:0015935">
    <property type="term" value="C:small ribosomal subunit"/>
    <property type="evidence" value="ECO:0007669"/>
    <property type="project" value="InterPro"/>
</dbReference>
<dbReference type="GO" id="GO:0019843">
    <property type="term" value="F:rRNA binding"/>
    <property type="evidence" value="ECO:0007669"/>
    <property type="project" value="UniProtKB-UniRule"/>
</dbReference>
<dbReference type="GO" id="GO:0003735">
    <property type="term" value="F:structural constituent of ribosome"/>
    <property type="evidence" value="ECO:0007669"/>
    <property type="project" value="InterPro"/>
</dbReference>
<dbReference type="GO" id="GO:0006412">
    <property type="term" value="P:translation"/>
    <property type="evidence" value="ECO:0007669"/>
    <property type="project" value="UniProtKB-UniRule"/>
</dbReference>
<dbReference type="CDD" id="cd14871">
    <property type="entry name" value="uS7_Chloroplast"/>
    <property type="match status" value="1"/>
</dbReference>
<dbReference type="FunFam" id="1.10.455.10:FF:000001">
    <property type="entry name" value="30S ribosomal protein S7"/>
    <property type="match status" value="1"/>
</dbReference>
<dbReference type="Gene3D" id="1.10.455.10">
    <property type="entry name" value="Ribosomal protein S7 domain"/>
    <property type="match status" value="1"/>
</dbReference>
<dbReference type="HAMAP" id="MF_00480_B">
    <property type="entry name" value="Ribosomal_uS7_B"/>
    <property type="match status" value="1"/>
</dbReference>
<dbReference type="InterPro" id="IPR000235">
    <property type="entry name" value="Ribosomal_uS7"/>
</dbReference>
<dbReference type="InterPro" id="IPR005717">
    <property type="entry name" value="Ribosomal_uS7_bac/org-type"/>
</dbReference>
<dbReference type="InterPro" id="IPR020606">
    <property type="entry name" value="Ribosomal_uS7_CS"/>
</dbReference>
<dbReference type="InterPro" id="IPR023798">
    <property type="entry name" value="Ribosomal_uS7_dom"/>
</dbReference>
<dbReference type="InterPro" id="IPR036823">
    <property type="entry name" value="Ribosomal_uS7_dom_sf"/>
</dbReference>
<dbReference type="NCBIfam" id="TIGR01029">
    <property type="entry name" value="rpsG_bact"/>
    <property type="match status" value="1"/>
</dbReference>
<dbReference type="PANTHER" id="PTHR11205">
    <property type="entry name" value="RIBOSOMAL PROTEIN S7"/>
    <property type="match status" value="1"/>
</dbReference>
<dbReference type="Pfam" id="PF00177">
    <property type="entry name" value="Ribosomal_S7"/>
    <property type="match status" value="1"/>
</dbReference>
<dbReference type="PIRSF" id="PIRSF002122">
    <property type="entry name" value="RPS7p_RPS7a_RPS5e_RPS7o"/>
    <property type="match status" value="1"/>
</dbReference>
<dbReference type="SUPFAM" id="SSF47973">
    <property type="entry name" value="Ribosomal protein S7"/>
    <property type="match status" value="1"/>
</dbReference>
<dbReference type="PROSITE" id="PS00052">
    <property type="entry name" value="RIBOSOMAL_S7"/>
    <property type="match status" value="1"/>
</dbReference>
<evidence type="ECO:0000250" key="1"/>
<evidence type="ECO:0000255" key="2">
    <source>
        <dbReference type="HAMAP-Rule" id="MF_00480"/>
    </source>
</evidence>
<evidence type="ECO:0000305" key="3"/>
<proteinExistence type="inferred from homology"/>